<keyword id="KW-1003">Cell membrane</keyword>
<keyword id="KW-0210">Decarboxylase</keyword>
<keyword id="KW-0444">Lipid biosynthesis</keyword>
<keyword id="KW-0443">Lipid metabolism</keyword>
<keyword id="KW-0456">Lyase</keyword>
<keyword id="KW-0472">Membrane</keyword>
<keyword id="KW-0594">Phospholipid biosynthesis</keyword>
<keyword id="KW-1208">Phospholipid metabolism</keyword>
<keyword id="KW-0670">Pyruvate</keyword>
<keyword id="KW-1185">Reference proteome</keyword>
<keyword id="KW-0865">Zymogen</keyword>
<reference key="1">
    <citation type="submission" date="2008-05" db="EMBL/GenBank/DDBJ databases">
        <title>Complete sequence of chromosome of Geobacter lovleyi SZ.</title>
        <authorList>
            <consortium name="US DOE Joint Genome Institute"/>
            <person name="Lucas S."/>
            <person name="Copeland A."/>
            <person name="Lapidus A."/>
            <person name="Glavina del Rio T."/>
            <person name="Dalin E."/>
            <person name="Tice H."/>
            <person name="Bruce D."/>
            <person name="Goodwin L."/>
            <person name="Pitluck S."/>
            <person name="Chertkov O."/>
            <person name="Meincke L."/>
            <person name="Brettin T."/>
            <person name="Detter J.C."/>
            <person name="Han C."/>
            <person name="Tapia R."/>
            <person name="Kuske C.R."/>
            <person name="Schmutz J."/>
            <person name="Larimer F."/>
            <person name="Land M."/>
            <person name="Hauser L."/>
            <person name="Kyrpides N."/>
            <person name="Mikhailova N."/>
            <person name="Sung Y."/>
            <person name="Fletcher K.E."/>
            <person name="Ritalahti K.M."/>
            <person name="Loeffler F.E."/>
            <person name="Richardson P."/>
        </authorList>
    </citation>
    <scope>NUCLEOTIDE SEQUENCE [LARGE SCALE GENOMIC DNA]</scope>
    <source>
        <strain>ATCC BAA-1151 / DSM 17278 / SZ</strain>
    </source>
</reference>
<sequence>MRPSNALITPEGYPFIAYSAGLFLFLAGGAVLLKSVALAVPAAVTLLLVLFVISFFRNPERMPPADTALLVAPADGTVVYVGPATQEHLGACQKISIFMSVFNVHVNRAPISGTVVDRFYKQGKFYDARHADASCENEQCGLVMEQDNGVRVAFVQIAGLIARRILCYAEVGDRLERGQRYGMIRFGSRVDVYLPEGLESLVTVGQTTVAGETALVRLG</sequence>
<dbReference type="EC" id="4.1.1.65" evidence="1"/>
<dbReference type="EMBL" id="CP001089">
    <property type="protein sequence ID" value="ACD96214.1"/>
    <property type="molecule type" value="Genomic_DNA"/>
</dbReference>
<dbReference type="RefSeq" id="WP_012470547.1">
    <property type="nucleotide sequence ID" value="NC_010814.1"/>
</dbReference>
<dbReference type="STRING" id="398767.Glov_2500"/>
<dbReference type="KEGG" id="glo:Glov_2500"/>
<dbReference type="eggNOG" id="COG0688">
    <property type="taxonomic scope" value="Bacteria"/>
</dbReference>
<dbReference type="HOGENOM" id="CLU_072492_0_0_7"/>
<dbReference type="OrthoDB" id="9790893at2"/>
<dbReference type="UniPathway" id="UPA00558">
    <property type="reaction ID" value="UER00616"/>
</dbReference>
<dbReference type="Proteomes" id="UP000002420">
    <property type="component" value="Chromosome"/>
</dbReference>
<dbReference type="GO" id="GO:0005886">
    <property type="term" value="C:plasma membrane"/>
    <property type="evidence" value="ECO:0007669"/>
    <property type="project" value="UniProtKB-SubCell"/>
</dbReference>
<dbReference type="GO" id="GO:0004609">
    <property type="term" value="F:phosphatidylserine decarboxylase activity"/>
    <property type="evidence" value="ECO:0007669"/>
    <property type="project" value="UniProtKB-UniRule"/>
</dbReference>
<dbReference type="GO" id="GO:0006646">
    <property type="term" value="P:phosphatidylethanolamine biosynthetic process"/>
    <property type="evidence" value="ECO:0007669"/>
    <property type="project" value="UniProtKB-UniRule"/>
</dbReference>
<dbReference type="HAMAP" id="MF_00664">
    <property type="entry name" value="PS_decarb_PSD_A"/>
    <property type="match status" value="1"/>
</dbReference>
<dbReference type="InterPro" id="IPR003817">
    <property type="entry name" value="PS_Dcarbxylase"/>
</dbReference>
<dbReference type="InterPro" id="IPR033175">
    <property type="entry name" value="PSD-A"/>
</dbReference>
<dbReference type="NCBIfam" id="NF003678">
    <property type="entry name" value="PRK05305.1-2"/>
    <property type="match status" value="1"/>
</dbReference>
<dbReference type="NCBIfam" id="NF003685">
    <property type="entry name" value="PRK05305.2-5"/>
    <property type="match status" value="1"/>
</dbReference>
<dbReference type="PANTHER" id="PTHR35809">
    <property type="entry name" value="ARCHAETIDYLSERINE DECARBOXYLASE PROENZYME-RELATED"/>
    <property type="match status" value="1"/>
</dbReference>
<dbReference type="PANTHER" id="PTHR35809:SF1">
    <property type="entry name" value="ARCHAETIDYLSERINE DECARBOXYLASE PROENZYME-RELATED"/>
    <property type="match status" value="1"/>
</dbReference>
<dbReference type="Pfam" id="PF02666">
    <property type="entry name" value="PS_Dcarbxylase"/>
    <property type="match status" value="1"/>
</dbReference>
<protein>
    <recommendedName>
        <fullName evidence="1">Phosphatidylserine decarboxylase proenzyme</fullName>
        <ecNumber evidence="1">4.1.1.65</ecNumber>
    </recommendedName>
    <component>
        <recommendedName>
            <fullName evidence="1">Phosphatidylserine decarboxylase alpha chain</fullName>
        </recommendedName>
    </component>
    <component>
        <recommendedName>
            <fullName evidence="1">Phosphatidylserine decarboxylase beta chain</fullName>
        </recommendedName>
    </component>
</protein>
<comment type="function">
    <text evidence="1">Catalyzes the formation of phosphatidylethanolamine (PtdEtn) from phosphatidylserine (PtdSer).</text>
</comment>
<comment type="catalytic activity">
    <reaction evidence="1">
        <text>a 1,2-diacyl-sn-glycero-3-phospho-L-serine + H(+) = a 1,2-diacyl-sn-glycero-3-phosphoethanolamine + CO2</text>
        <dbReference type="Rhea" id="RHEA:20828"/>
        <dbReference type="ChEBI" id="CHEBI:15378"/>
        <dbReference type="ChEBI" id="CHEBI:16526"/>
        <dbReference type="ChEBI" id="CHEBI:57262"/>
        <dbReference type="ChEBI" id="CHEBI:64612"/>
        <dbReference type="EC" id="4.1.1.65"/>
    </reaction>
</comment>
<comment type="cofactor">
    <cofactor evidence="1">
        <name>pyruvate</name>
        <dbReference type="ChEBI" id="CHEBI:15361"/>
    </cofactor>
    <text evidence="1">Binds 1 pyruvoyl group covalently per subunit.</text>
</comment>
<comment type="pathway">
    <text evidence="1">Phospholipid metabolism; phosphatidylethanolamine biosynthesis; phosphatidylethanolamine from CDP-diacylglycerol: step 2/2.</text>
</comment>
<comment type="subunit">
    <text evidence="1">Heterodimer of a large membrane-associated beta subunit and a small pyruvoyl-containing alpha subunit.</text>
</comment>
<comment type="subcellular location">
    <subcellularLocation>
        <location evidence="1">Cell membrane</location>
        <topology evidence="1">Peripheral membrane protein</topology>
    </subcellularLocation>
</comment>
<comment type="PTM">
    <text evidence="1">Is synthesized initially as an inactive proenzyme. Formation of the active enzyme involves a self-maturation process in which the active site pyruvoyl group is generated from an internal serine residue via an autocatalytic post-translational modification. Two non-identical subunits are generated from the proenzyme in this reaction, and the pyruvate is formed at the N-terminus of the alpha chain, which is derived from the carboxyl end of the proenzyme. The post-translation cleavage follows an unusual pathway, termed non-hydrolytic serinolysis, in which the side chain hydroxyl group of the serine supplies its oxygen atom to form the C-terminus of the beta chain, while the remainder of the serine residue undergoes an oxidative deamination to produce ammonia and the pyruvoyl prosthetic group on the alpha chain.</text>
</comment>
<comment type="similarity">
    <text evidence="1">Belongs to the phosphatidylserine decarboxylase family. PSD-A subfamily.</text>
</comment>
<gene>
    <name evidence="1" type="primary">psd</name>
    <name type="ordered locus">Glov_2500</name>
</gene>
<name>PSD_TRIL1</name>
<proteinExistence type="inferred from homology"/>
<evidence type="ECO:0000255" key="1">
    <source>
        <dbReference type="HAMAP-Rule" id="MF_00664"/>
    </source>
</evidence>
<organism>
    <name type="scientific">Trichlorobacter lovleyi (strain ATCC BAA-1151 / DSM 17278 / SZ)</name>
    <name type="common">Geobacter lovleyi</name>
    <dbReference type="NCBI Taxonomy" id="398767"/>
    <lineage>
        <taxon>Bacteria</taxon>
        <taxon>Pseudomonadati</taxon>
        <taxon>Thermodesulfobacteriota</taxon>
        <taxon>Desulfuromonadia</taxon>
        <taxon>Geobacterales</taxon>
        <taxon>Geobacteraceae</taxon>
        <taxon>Trichlorobacter</taxon>
    </lineage>
</organism>
<feature type="chain" id="PRO_1000131468" description="Phosphatidylserine decarboxylase beta chain" evidence="1">
    <location>
        <begin position="1"/>
        <end position="187"/>
    </location>
</feature>
<feature type="chain" id="PRO_1000131469" description="Phosphatidylserine decarboxylase alpha chain" evidence="1">
    <location>
        <begin position="188"/>
        <end position="219"/>
    </location>
</feature>
<feature type="active site" description="Schiff-base intermediate with substrate; via pyruvic acid" evidence="1">
    <location>
        <position position="188"/>
    </location>
</feature>
<feature type="site" description="Cleavage (non-hydrolytic); by autocatalysis" evidence="1">
    <location>
        <begin position="187"/>
        <end position="188"/>
    </location>
</feature>
<feature type="modified residue" description="Pyruvic acid (Ser); by autocatalysis" evidence="1">
    <location>
        <position position="188"/>
    </location>
</feature>
<accession>B3E5X3</accession>